<name>FPPS_MOUSE</name>
<comment type="function">
    <text evidence="1">Key enzyme in isoprenoid biosynthesis which catalyzes the formation of farnesyl diphosphate (FPP), a precursor for several classes of essential metabolites including sterols, dolichols, carotenoids, and ubiquinones. FPP also serves as substrate for protein farnesylation and geranylgeranylation. Catalyzes the sequential condensation of isopentenyl pyrophosphate with the allylic pyrophosphates, dimethylallyl pyrophosphate, and then with the resultant geranylpyrophosphate to the ultimate product farnesyl pyrophosphate (By similarity).</text>
</comment>
<comment type="catalytic activity">
    <reaction>
        <text>isopentenyl diphosphate + dimethylallyl diphosphate = (2E)-geranyl diphosphate + diphosphate</text>
        <dbReference type="Rhea" id="RHEA:22408"/>
        <dbReference type="ChEBI" id="CHEBI:33019"/>
        <dbReference type="ChEBI" id="CHEBI:57623"/>
        <dbReference type="ChEBI" id="CHEBI:58057"/>
        <dbReference type="ChEBI" id="CHEBI:128769"/>
        <dbReference type="EC" id="2.5.1.1"/>
    </reaction>
</comment>
<comment type="catalytic activity">
    <reaction>
        <text>isopentenyl diphosphate + (2E)-geranyl diphosphate = (2E,6E)-farnesyl diphosphate + diphosphate</text>
        <dbReference type="Rhea" id="RHEA:19361"/>
        <dbReference type="ChEBI" id="CHEBI:33019"/>
        <dbReference type="ChEBI" id="CHEBI:58057"/>
        <dbReference type="ChEBI" id="CHEBI:128769"/>
        <dbReference type="ChEBI" id="CHEBI:175763"/>
        <dbReference type="EC" id="2.5.1.10"/>
    </reaction>
</comment>
<comment type="cofactor">
    <cofactor evidence="1">
        <name>Mg(2+)</name>
        <dbReference type="ChEBI" id="CHEBI:18420"/>
    </cofactor>
    <text evidence="1">Binds 2 Mg(2+) ions per subunit.</text>
</comment>
<comment type="activity regulation">
    <text evidence="1">Inactivated by interferon-induced RSAD2. This inactivation may result of disruption of lipid rafts at the plasma membrane, and thus have an antiviral effect since many enveloped viruses need lipid rafts to bud efficiently out of the cell (By similarity).</text>
</comment>
<comment type="pathway">
    <text>Isoprenoid biosynthesis; farnesyl diphosphate biosynthesis; farnesyl diphosphate from geranyl diphosphate and isopentenyl diphosphate: step 1/1.</text>
</comment>
<comment type="pathway">
    <text>Isoprenoid biosynthesis; geranyl diphosphate biosynthesis; geranyl diphosphate from dimethylallyl diphosphate and isopentenyl diphosphate: step 1/1.</text>
</comment>
<comment type="subunit">
    <text evidence="1">Homodimer. Interacts with RSAD2 (By similarity).</text>
</comment>
<comment type="subcellular location">
    <subcellularLocation>
        <location evidence="1">Cytoplasm</location>
    </subcellularLocation>
</comment>
<comment type="similarity">
    <text evidence="3">Belongs to the FPP/GGPP synthase family.</text>
</comment>
<proteinExistence type="evidence at protein level"/>
<protein>
    <recommendedName>
        <fullName>Farnesyl pyrophosphate synthase</fullName>
        <shortName>FPP synthase</shortName>
        <shortName>FPS</shortName>
        <ecNumber>2.5.1.10</ecNumber>
    </recommendedName>
    <alternativeName>
        <fullName>(2E,6E)-farnesyl diphosphate synthase</fullName>
    </alternativeName>
    <alternativeName>
        <fullName>Cholesterol-regulated 39 kDa protein</fullName>
        <shortName>CR 39</shortName>
    </alternativeName>
    <alternativeName>
        <fullName>Dimethylallyltranstransferase</fullName>
        <ecNumber>2.5.1.1</ecNumber>
    </alternativeName>
    <alternativeName>
        <fullName>Farnesyl diphosphate synthase</fullName>
    </alternativeName>
    <alternativeName>
        <fullName>Geranyltranstransferase</fullName>
    </alternativeName>
</protein>
<organism>
    <name type="scientific">Mus musculus</name>
    <name type="common">Mouse</name>
    <dbReference type="NCBI Taxonomy" id="10090"/>
    <lineage>
        <taxon>Eukaryota</taxon>
        <taxon>Metazoa</taxon>
        <taxon>Chordata</taxon>
        <taxon>Craniata</taxon>
        <taxon>Vertebrata</taxon>
        <taxon>Euteleostomi</taxon>
        <taxon>Mammalia</taxon>
        <taxon>Eutheria</taxon>
        <taxon>Euarchontoglires</taxon>
        <taxon>Glires</taxon>
        <taxon>Rodentia</taxon>
        <taxon>Myomorpha</taxon>
        <taxon>Muroidea</taxon>
        <taxon>Muridae</taxon>
        <taxon>Murinae</taxon>
        <taxon>Mus</taxon>
        <taxon>Mus</taxon>
    </lineage>
</organism>
<dbReference type="EC" id="2.5.1.10"/>
<dbReference type="EC" id="2.5.1.1"/>
<dbReference type="EMBL" id="AF309508">
    <property type="protein sequence ID" value="AAL09445.1"/>
    <property type="molecule type" value="mRNA"/>
</dbReference>
<dbReference type="EMBL" id="AK088601">
    <property type="protein sequence ID" value="BAC40446.1"/>
    <property type="molecule type" value="mRNA"/>
</dbReference>
<dbReference type="EMBL" id="BC048497">
    <property type="protein sequence ID" value="AAH48497.1"/>
    <property type="molecule type" value="mRNA"/>
</dbReference>
<dbReference type="CCDS" id="CCDS17488.1"/>
<dbReference type="RefSeq" id="NP_001240680.1">
    <property type="nucleotide sequence ID" value="NM_001253751.1"/>
</dbReference>
<dbReference type="RefSeq" id="NP_608219.1">
    <property type="nucleotide sequence ID" value="NM_134469.4"/>
</dbReference>
<dbReference type="SMR" id="Q920E5"/>
<dbReference type="BioGRID" id="225377">
    <property type="interactions" value="19"/>
</dbReference>
<dbReference type="FunCoup" id="Q920E5">
    <property type="interactions" value="3253"/>
</dbReference>
<dbReference type="STRING" id="10090.ENSMUSP00000142770"/>
<dbReference type="BindingDB" id="Q920E5"/>
<dbReference type="ChEMBL" id="CHEMBL4523414"/>
<dbReference type="DrugCentral" id="Q920E5"/>
<dbReference type="GlyGen" id="Q920E5">
    <property type="glycosylation" value="1 site, 1 O-linked glycan (1 site)"/>
</dbReference>
<dbReference type="iPTMnet" id="Q920E5"/>
<dbReference type="PhosphoSitePlus" id="Q920E5"/>
<dbReference type="SwissPalm" id="Q920E5"/>
<dbReference type="jPOST" id="Q920E5"/>
<dbReference type="PaxDb" id="10090-ENSMUSP00000080531"/>
<dbReference type="ProteomicsDB" id="271603"/>
<dbReference type="Pumba" id="Q920E5"/>
<dbReference type="TopDownProteomics" id="Q920E5"/>
<dbReference type="Antibodypedia" id="34190">
    <property type="antibodies" value="453 antibodies from 37 providers"/>
</dbReference>
<dbReference type="DNASU" id="110196"/>
<dbReference type="Ensembl" id="ENSMUST00000081848.13">
    <property type="protein sequence ID" value="ENSMUSP00000080531.9"/>
    <property type="gene ID" value="ENSMUSG00000059743.13"/>
</dbReference>
<dbReference type="Ensembl" id="ENSMUST00000196709.5">
    <property type="protein sequence ID" value="ENSMUSP00000142770.2"/>
    <property type="gene ID" value="ENSMUSG00000059743.13"/>
</dbReference>
<dbReference type="GeneID" id="110196"/>
<dbReference type="KEGG" id="mmu:110196"/>
<dbReference type="UCSC" id="uc008pxo.2">
    <property type="organism name" value="mouse"/>
</dbReference>
<dbReference type="AGR" id="MGI:104888"/>
<dbReference type="CTD" id="2224"/>
<dbReference type="MGI" id="MGI:104888">
    <property type="gene designation" value="Fdps"/>
</dbReference>
<dbReference type="VEuPathDB" id="HostDB:ENSMUSG00000059743"/>
<dbReference type="eggNOG" id="KOG0711">
    <property type="taxonomic scope" value="Eukaryota"/>
</dbReference>
<dbReference type="GeneTree" id="ENSGT00900000141074"/>
<dbReference type="InParanoid" id="Q920E5"/>
<dbReference type="OMA" id="CSWVVNQ"/>
<dbReference type="OrthoDB" id="10257492at2759"/>
<dbReference type="PhylomeDB" id="Q920E5"/>
<dbReference type="TreeFam" id="TF300897"/>
<dbReference type="Reactome" id="R-MMU-191273">
    <property type="pathway name" value="Cholesterol biosynthesis"/>
</dbReference>
<dbReference type="UniPathway" id="UPA00259">
    <property type="reaction ID" value="UER00368"/>
</dbReference>
<dbReference type="UniPathway" id="UPA00260">
    <property type="reaction ID" value="UER00369"/>
</dbReference>
<dbReference type="BioGRID-ORCS" id="110196">
    <property type="hits" value="15 hits in 59 CRISPR screens"/>
</dbReference>
<dbReference type="ChiTaRS" id="Fdps">
    <property type="organism name" value="mouse"/>
</dbReference>
<dbReference type="PRO" id="PR:Q920E5"/>
<dbReference type="Proteomes" id="UP000000589">
    <property type="component" value="Chromosome 3"/>
</dbReference>
<dbReference type="RNAct" id="Q920E5">
    <property type="molecule type" value="protein"/>
</dbReference>
<dbReference type="Bgee" id="ENSMUSG00000059743">
    <property type="expression patterns" value="Expressed in midbrain and 145 other cell types or tissues"/>
</dbReference>
<dbReference type="ExpressionAtlas" id="Q920E5">
    <property type="expression patterns" value="baseline and differential"/>
</dbReference>
<dbReference type="GO" id="GO:0005829">
    <property type="term" value="C:cytosol"/>
    <property type="evidence" value="ECO:0007669"/>
    <property type="project" value="Ensembl"/>
</dbReference>
<dbReference type="GO" id="GO:0005739">
    <property type="term" value="C:mitochondrion"/>
    <property type="evidence" value="ECO:0007005"/>
    <property type="project" value="MGI"/>
</dbReference>
<dbReference type="GO" id="GO:0005654">
    <property type="term" value="C:nucleoplasm"/>
    <property type="evidence" value="ECO:0007669"/>
    <property type="project" value="Ensembl"/>
</dbReference>
<dbReference type="GO" id="GO:0004337">
    <property type="term" value="F:(2E,6E)-farnesyl diphosphate synthase activity"/>
    <property type="evidence" value="ECO:0007669"/>
    <property type="project" value="UniProtKB-EC"/>
</dbReference>
<dbReference type="GO" id="GO:0004161">
    <property type="term" value="F:dimethylallyltranstransferase activity"/>
    <property type="evidence" value="ECO:0007669"/>
    <property type="project" value="UniProtKB-EC"/>
</dbReference>
<dbReference type="GO" id="GO:0046872">
    <property type="term" value="F:metal ion binding"/>
    <property type="evidence" value="ECO:0007669"/>
    <property type="project" value="UniProtKB-KW"/>
</dbReference>
<dbReference type="GO" id="GO:0006695">
    <property type="term" value="P:cholesterol biosynthetic process"/>
    <property type="evidence" value="ECO:0007669"/>
    <property type="project" value="UniProtKB-KW"/>
</dbReference>
<dbReference type="GO" id="GO:0045337">
    <property type="term" value="P:farnesyl diphosphate biosynthetic process"/>
    <property type="evidence" value="ECO:0007669"/>
    <property type="project" value="UniProtKB-UniPathway"/>
</dbReference>
<dbReference type="GO" id="GO:0033384">
    <property type="term" value="P:geranyl diphosphate biosynthetic process"/>
    <property type="evidence" value="ECO:0007669"/>
    <property type="project" value="UniProtKB-UniPathway"/>
</dbReference>
<dbReference type="CDD" id="cd00685">
    <property type="entry name" value="Trans_IPPS_HT"/>
    <property type="match status" value="1"/>
</dbReference>
<dbReference type="FunFam" id="1.10.600.10:FF:000052">
    <property type="entry name" value="Farnesyl pyrophosphate synthase"/>
    <property type="match status" value="1"/>
</dbReference>
<dbReference type="Gene3D" id="1.10.600.10">
    <property type="entry name" value="Farnesyl Diphosphate Synthase"/>
    <property type="match status" value="1"/>
</dbReference>
<dbReference type="InterPro" id="IPR039702">
    <property type="entry name" value="FPS1-like"/>
</dbReference>
<dbReference type="InterPro" id="IPR008949">
    <property type="entry name" value="Isoprenoid_synthase_dom_sf"/>
</dbReference>
<dbReference type="InterPro" id="IPR000092">
    <property type="entry name" value="Polyprenyl_synt"/>
</dbReference>
<dbReference type="InterPro" id="IPR033749">
    <property type="entry name" value="Polyprenyl_synt_CS"/>
</dbReference>
<dbReference type="PANTHER" id="PTHR11525:SF0">
    <property type="entry name" value="FARNESYL PYROPHOSPHATE SYNTHASE"/>
    <property type="match status" value="1"/>
</dbReference>
<dbReference type="PANTHER" id="PTHR11525">
    <property type="entry name" value="FARNESYL-PYROPHOSPHATE SYNTHETASE"/>
    <property type="match status" value="1"/>
</dbReference>
<dbReference type="Pfam" id="PF00348">
    <property type="entry name" value="polyprenyl_synt"/>
    <property type="match status" value="1"/>
</dbReference>
<dbReference type="SFLD" id="SFLDS00005">
    <property type="entry name" value="Isoprenoid_Synthase_Type_I"/>
    <property type="match status" value="1"/>
</dbReference>
<dbReference type="SFLD" id="SFLDG01017">
    <property type="entry name" value="Polyprenyl_Transferase_Like"/>
    <property type="match status" value="1"/>
</dbReference>
<dbReference type="SUPFAM" id="SSF48576">
    <property type="entry name" value="Terpenoid synthases"/>
    <property type="match status" value="1"/>
</dbReference>
<dbReference type="PROSITE" id="PS00723">
    <property type="entry name" value="POLYPRENYL_SYNTHASE_1"/>
    <property type="match status" value="1"/>
</dbReference>
<dbReference type="PROSITE" id="PS00444">
    <property type="entry name" value="POLYPRENYL_SYNTHASE_2"/>
    <property type="match status" value="1"/>
</dbReference>
<gene>
    <name type="primary">Fdps</name>
</gene>
<reference key="1">
    <citation type="journal article" date="2002" name="Biochem. J.">
        <title>A novel role for farnesyl pyrophosphate synthase in fibroblast growth factor-mediated signal transduction.</title>
        <authorList>
            <person name="Reilly J.F."/>
            <person name="Martinez S.D."/>
            <person name="Mickey G."/>
            <person name="Maher P.A."/>
        </authorList>
    </citation>
    <scope>NUCLEOTIDE SEQUENCE [MRNA]</scope>
</reference>
<reference key="2">
    <citation type="journal article" date="2005" name="Science">
        <title>The transcriptional landscape of the mammalian genome.</title>
        <authorList>
            <person name="Carninci P."/>
            <person name="Kasukawa T."/>
            <person name="Katayama S."/>
            <person name="Gough J."/>
            <person name="Frith M.C."/>
            <person name="Maeda N."/>
            <person name="Oyama R."/>
            <person name="Ravasi T."/>
            <person name="Lenhard B."/>
            <person name="Wells C."/>
            <person name="Kodzius R."/>
            <person name="Shimokawa K."/>
            <person name="Bajic V.B."/>
            <person name="Brenner S.E."/>
            <person name="Batalov S."/>
            <person name="Forrest A.R."/>
            <person name="Zavolan M."/>
            <person name="Davis M.J."/>
            <person name="Wilming L.G."/>
            <person name="Aidinis V."/>
            <person name="Allen J.E."/>
            <person name="Ambesi-Impiombato A."/>
            <person name="Apweiler R."/>
            <person name="Aturaliya R.N."/>
            <person name="Bailey T.L."/>
            <person name="Bansal M."/>
            <person name="Baxter L."/>
            <person name="Beisel K.W."/>
            <person name="Bersano T."/>
            <person name="Bono H."/>
            <person name="Chalk A.M."/>
            <person name="Chiu K.P."/>
            <person name="Choudhary V."/>
            <person name="Christoffels A."/>
            <person name="Clutterbuck D.R."/>
            <person name="Crowe M.L."/>
            <person name="Dalla E."/>
            <person name="Dalrymple B.P."/>
            <person name="de Bono B."/>
            <person name="Della Gatta G."/>
            <person name="di Bernardo D."/>
            <person name="Down T."/>
            <person name="Engstrom P."/>
            <person name="Fagiolini M."/>
            <person name="Faulkner G."/>
            <person name="Fletcher C.F."/>
            <person name="Fukushima T."/>
            <person name="Furuno M."/>
            <person name="Futaki S."/>
            <person name="Gariboldi M."/>
            <person name="Georgii-Hemming P."/>
            <person name="Gingeras T.R."/>
            <person name="Gojobori T."/>
            <person name="Green R.E."/>
            <person name="Gustincich S."/>
            <person name="Harbers M."/>
            <person name="Hayashi Y."/>
            <person name="Hensch T.K."/>
            <person name="Hirokawa N."/>
            <person name="Hill D."/>
            <person name="Huminiecki L."/>
            <person name="Iacono M."/>
            <person name="Ikeo K."/>
            <person name="Iwama A."/>
            <person name="Ishikawa T."/>
            <person name="Jakt M."/>
            <person name="Kanapin A."/>
            <person name="Katoh M."/>
            <person name="Kawasawa Y."/>
            <person name="Kelso J."/>
            <person name="Kitamura H."/>
            <person name="Kitano H."/>
            <person name="Kollias G."/>
            <person name="Krishnan S.P."/>
            <person name="Kruger A."/>
            <person name="Kummerfeld S.K."/>
            <person name="Kurochkin I.V."/>
            <person name="Lareau L.F."/>
            <person name="Lazarevic D."/>
            <person name="Lipovich L."/>
            <person name="Liu J."/>
            <person name="Liuni S."/>
            <person name="McWilliam S."/>
            <person name="Madan Babu M."/>
            <person name="Madera M."/>
            <person name="Marchionni L."/>
            <person name="Matsuda H."/>
            <person name="Matsuzawa S."/>
            <person name="Miki H."/>
            <person name="Mignone F."/>
            <person name="Miyake S."/>
            <person name="Morris K."/>
            <person name="Mottagui-Tabar S."/>
            <person name="Mulder N."/>
            <person name="Nakano N."/>
            <person name="Nakauchi H."/>
            <person name="Ng P."/>
            <person name="Nilsson R."/>
            <person name="Nishiguchi S."/>
            <person name="Nishikawa S."/>
            <person name="Nori F."/>
            <person name="Ohara O."/>
            <person name="Okazaki Y."/>
            <person name="Orlando V."/>
            <person name="Pang K.C."/>
            <person name="Pavan W.J."/>
            <person name="Pavesi G."/>
            <person name="Pesole G."/>
            <person name="Petrovsky N."/>
            <person name="Piazza S."/>
            <person name="Reed J."/>
            <person name="Reid J.F."/>
            <person name="Ring B.Z."/>
            <person name="Ringwald M."/>
            <person name="Rost B."/>
            <person name="Ruan Y."/>
            <person name="Salzberg S.L."/>
            <person name="Sandelin A."/>
            <person name="Schneider C."/>
            <person name="Schoenbach C."/>
            <person name="Sekiguchi K."/>
            <person name="Semple C.A."/>
            <person name="Seno S."/>
            <person name="Sessa L."/>
            <person name="Sheng Y."/>
            <person name="Shibata Y."/>
            <person name="Shimada H."/>
            <person name="Shimada K."/>
            <person name="Silva D."/>
            <person name="Sinclair B."/>
            <person name="Sperling S."/>
            <person name="Stupka E."/>
            <person name="Sugiura K."/>
            <person name="Sultana R."/>
            <person name="Takenaka Y."/>
            <person name="Taki K."/>
            <person name="Tammoja K."/>
            <person name="Tan S.L."/>
            <person name="Tang S."/>
            <person name="Taylor M.S."/>
            <person name="Tegner J."/>
            <person name="Teichmann S.A."/>
            <person name="Ueda H.R."/>
            <person name="van Nimwegen E."/>
            <person name="Verardo R."/>
            <person name="Wei C.L."/>
            <person name="Yagi K."/>
            <person name="Yamanishi H."/>
            <person name="Zabarovsky E."/>
            <person name="Zhu S."/>
            <person name="Zimmer A."/>
            <person name="Hide W."/>
            <person name="Bult C."/>
            <person name="Grimmond S.M."/>
            <person name="Teasdale R.D."/>
            <person name="Liu E.T."/>
            <person name="Brusic V."/>
            <person name="Quackenbush J."/>
            <person name="Wahlestedt C."/>
            <person name="Mattick J.S."/>
            <person name="Hume D.A."/>
            <person name="Kai C."/>
            <person name="Sasaki D."/>
            <person name="Tomaru Y."/>
            <person name="Fukuda S."/>
            <person name="Kanamori-Katayama M."/>
            <person name="Suzuki M."/>
            <person name="Aoki J."/>
            <person name="Arakawa T."/>
            <person name="Iida J."/>
            <person name="Imamura K."/>
            <person name="Itoh M."/>
            <person name="Kato T."/>
            <person name="Kawaji H."/>
            <person name="Kawagashira N."/>
            <person name="Kawashima T."/>
            <person name="Kojima M."/>
            <person name="Kondo S."/>
            <person name="Konno H."/>
            <person name="Nakano K."/>
            <person name="Ninomiya N."/>
            <person name="Nishio T."/>
            <person name="Okada M."/>
            <person name="Plessy C."/>
            <person name="Shibata K."/>
            <person name="Shiraki T."/>
            <person name="Suzuki S."/>
            <person name="Tagami M."/>
            <person name="Waki K."/>
            <person name="Watahiki A."/>
            <person name="Okamura-Oho Y."/>
            <person name="Suzuki H."/>
            <person name="Kawai J."/>
            <person name="Hayashizaki Y."/>
        </authorList>
    </citation>
    <scope>NUCLEOTIDE SEQUENCE [LARGE SCALE MRNA]</scope>
    <source>
        <strain>NOD</strain>
        <tissue>Thymus</tissue>
    </source>
</reference>
<reference key="3">
    <citation type="journal article" date="2004" name="Genome Res.">
        <title>The status, quality, and expansion of the NIH full-length cDNA project: the Mammalian Gene Collection (MGC).</title>
        <authorList>
            <consortium name="The MGC Project Team"/>
        </authorList>
    </citation>
    <scope>NUCLEOTIDE SEQUENCE [LARGE SCALE MRNA]</scope>
    <source>
        <tissue>Brain</tissue>
    </source>
</reference>
<reference key="4">
    <citation type="journal article" date="2010" name="Cell">
        <title>A tissue-specific atlas of mouse protein phosphorylation and expression.</title>
        <authorList>
            <person name="Huttlin E.L."/>
            <person name="Jedrychowski M.P."/>
            <person name="Elias J.E."/>
            <person name="Goswami T."/>
            <person name="Rad R."/>
            <person name="Beausoleil S.A."/>
            <person name="Villen J."/>
            <person name="Haas W."/>
            <person name="Sowa M.E."/>
            <person name="Gygi S.P."/>
        </authorList>
    </citation>
    <scope>IDENTIFICATION BY MASS SPECTROMETRY [LARGE SCALE ANALYSIS]</scope>
    <source>
        <tissue>Brain</tissue>
        <tissue>Kidney</tissue>
        <tissue>Liver</tissue>
        <tissue>Lung</tissue>
        <tissue>Pancreas</tissue>
        <tissue>Spleen</tissue>
        <tissue>Testis</tissue>
    </source>
</reference>
<sequence length="353" mass="40582">MNGNQKLDAYNQEKQNFIQHFSQIVKVLTEKELGHPEIGDAIARLKEVLEYNALGGKYNRGLTVVQAFQELVEPKKQDAESLQRALTVGWCVELLQAFFLVSDDIMDSSLTRRGQICWYQKPGIGLDAINDALLLEASIYRLLKFYCREQPYYLNLLELFLQSSYQTEIGQTLDLMTAPQGHVDLGRYTEKRYKSIVKYKTAFYSFYLPIAAAMYMAGIDGEKEHANALKILMEMGEFFQVQDDYLDLFGDPSVTGKVGTDIQDNKCSWLVVQCLLRASPQQRQILEENYGQKDPEKVARVKALYEALDLQSAFFKYEEDSYNRLKSLIEQCSAPLPPSIFMELANKIYKRRK</sequence>
<feature type="chain" id="PRO_0000123945" description="Farnesyl pyrophosphate synthase">
    <location>
        <begin position="1"/>
        <end position="353"/>
    </location>
</feature>
<feature type="binding site" evidence="2">
    <location>
        <position position="57"/>
    </location>
    <ligand>
        <name>isopentenyl diphosphate</name>
        <dbReference type="ChEBI" id="CHEBI:128769"/>
    </ligand>
</feature>
<feature type="binding site" evidence="2">
    <location>
        <position position="60"/>
    </location>
    <ligand>
        <name>isopentenyl diphosphate</name>
        <dbReference type="ChEBI" id="CHEBI:128769"/>
    </ligand>
</feature>
<feature type="binding site" evidence="2">
    <location>
        <position position="96"/>
    </location>
    <ligand>
        <name>isopentenyl diphosphate</name>
        <dbReference type="ChEBI" id="CHEBI:128769"/>
    </ligand>
</feature>
<feature type="binding site" evidence="2">
    <location>
        <position position="103"/>
    </location>
    <ligand>
        <name>Mg(2+)</name>
        <dbReference type="ChEBI" id="CHEBI:18420"/>
        <label>1</label>
    </ligand>
</feature>
<feature type="binding site" evidence="2">
    <location>
        <position position="103"/>
    </location>
    <ligand>
        <name>Mg(2+)</name>
        <dbReference type="ChEBI" id="CHEBI:18420"/>
        <label>2</label>
    </ligand>
</feature>
<feature type="binding site" evidence="2">
    <location>
        <position position="107"/>
    </location>
    <ligand>
        <name>Mg(2+)</name>
        <dbReference type="ChEBI" id="CHEBI:18420"/>
        <label>1</label>
    </ligand>
</feature>
<feature type="binding site" evidence="2">
    <location>
        <position position="107"/>
    </location>
    <ligand>
        <name>Mg(2+)</name>
        <dbReference type="ChEBI" id="CHEBI:18420"/>
        <label>2</label>
    </ligand>
</feature>
<feature type="binding site" evidence="1">
    <location>
        <position position="112"/>
    </location>
    <ligand>
        <name>dimethylallyl diphosphate</name>
        <dbReference type="ChEBI" id="CHEBI:57623"/>
    </ligand>
</feature>
<feature type="binding site" evidence="2">
    <location>
        <position position="113"/>
    </location>
    <ligand>
        <name>isopentenyl diphosphate</name>
        <dbReference type="ChEBI" id="CHEBI:128769"/>
    </ligand>
</feature>
<feature type="binding site" evidence="1">
    <location>
        <position position="200"/>
    </location>
    <ligand>
        <name>dimethylallyl diphosphate</name>
        <dbReference type="ChEBI" id="CHEBI:57623"/>
    </ligand>
</feature>
<feature type="binding site" evidence="1">
    <location>
        <position position="201"/>
    </location>
    <ligand>
        <name>dimethylallyl diphosphate</name>
        <dbReference type="ChEBI" id="CHEBI:57623"/>
    </ligand>
</feature>
<feature type="binding site" evidence="1">
    <location>
        <position position="240"/>
    </location>
    <ligand>
        <name>dimethylallyl diphosphate</name>
        <dbReference type="ChEBI" id="CHEBI:57623"/>
    </ligand>
</feature>
<feature type="binding site" evidence="1">
    <location>
        <position position="257"/>
    </location>
    <ligand>
        <name>dimethylallyl diphosphate</name>
        <dbReference type="ChEBI" id="CHEBI:57623"/>
    </ligand>
</feature>
<feature type="binding site" evidence="1">
    <location>
        <position position="266"/>
    </location>
    <ligand>
        <name>dimethylallyl diphosphate</name>
        <dbReference type="ChEBI" id="CHEBI:57623"/>
    </ligand>
</feature>
<feature type="site" description="Important for determining product chain length" evidence="1">
    <location>
        <position position="98"/>
    </location>
</feature>
<feature type="site" description="Important for determining product chain length" evidence="1">
    <location>
        <position position="99"/>
    </location>
</feature>
<feature type="modified residue" description="N6-(2-hydroxyisobutyryl)lysine; alternate" evidence="2">
    <location>
        <position position="57"/>
    </location>
</feature>
<feature type="modified residue" description="N6-acetyllysine; alternate" evidence="2">
    <location>
        <position position="57"/>
    </location>
</feature>
<keyword id="KW-0007">Acetylation</keyword>
<keyword id="KW-0152">Cholesterol biosynthesis</keyword>
<keyword id="KW-0153">Cholesterol metabolism</keyword>
<keyword id="KW-0963">Cytoplasm</keyword>
<keyword id="KW-0379">Hydroxylation</keyword>
<keyword id="KW-0414">Isoprene biosynthesis</keyword>
<keyword id="KW-0444">Lipid biosynthesis</keyword>
<keyword id="KW-0443">Lipid metabolism</keyword>
<keyword id="KW-0460">Magnesium</keyword>
<keyword id="KW-0479">Metal-binding</keyword>
<keyword id="KW-1185">Reference proteome</keyword>
<keyword id="KW-0752">Steroid biosynthesis</keyword>
<keyword id="KW-0753">Steroid metabolism</keyword>
<keyword id="KW-0756">Sterol biosynthesis</keyword>
<keyword id="KW-1207">Sterol metabolism</keyword>
<keyword id="KW-0808">Transferase</keyword>
<evidence type="ECO:0000250" key="1"/>
<evidence type="ECO:0000250" key="2">
    <source>
        <dbReference type="UniProtKB" id="P14324"/>
    </source>
</evidence>
<evidence type="ECO:0000305" key="3"/>
<accession>Q920E5</accession>